<gene>
    <name type="primary">OPG133</name>
    <name type="synonym">VETFL</name>
    <name type="ORF">A7L</name>
</gene>
<organism>
    <name type="scientific">Variola virus</name>
    <dbReference type="NCBI Taxonomy" id="10255"/>
    <lineage>
        <taxon>Viruses</taxon>
        <taxon>Varidnaviria</taxon>
        <taxon>Bamfordvirae</taxon>
        <taxon>Nucleocytoviricota</taxon>
        <taxon>Pokkesviricetes</taxon>
        <taxon>Chitovirales</taxon>
        <taxon>Poxviridae</taxon>
        <taxon>Chordopoxvirinae</taxon>
        <taxon>Orthopoxvirus</taxon>
    </lineage>
</organism>
<protein>
    <recommendedName>
        <fullName>Early transcription factor 82 kDa subunit</fullName>
    </recommendedName>
    <alternativeName>
        <fullName>ETF large subunit</fullName>
    </alternativeName>
    <alternativeName>
        <fullName>VETF A7 subunit</fullName>
    </alternativeName>
</protein>
<sequence>MRYIVSPQLVLQVGKGQEVERALYLTPYDYIDEKSPIYYFLRSHLNIQQPEIVKRHILLTLRMTQLKGYLGNLLDIKDDIIIYSHKNNLEYSYVDNTIFNPFVYTQKKTLLKNDSFLYNVYPGACDFLVIWVARACDTSIPEFGSYEDVDNNIIKFETMLMDVFPQLDLDITVESKFNNIFRTNLKLTGLKKIIQRVQDLDINYKSLLSRYDEHFINMTGNHFILNDEQLNLSIWDLDGTLALSSDGDTVMINNVKLFTDLVSDIDTQMERIKGDITYKVHLATPINSRIKLDIETSFIFIETATNNILLSSDKKISIILAKNHISIKVKNHIPNIEKYFTFLVIAINAMFNSVQKSADFTKVETVYWSRICQNTKNKNRKPVIINYLDPGMKKISNNFYRSDEKEVFINDNDIMFTCMDPLGKYNKVGFLNIFHDMRKYCIPCCFLHDQSHRSTFSSCVHQIDVEKKIVSPYILNFGKVVTESKMSFLPIIFDAFLNDGMTANMEQDNKRLKETSGYHIVRCCTGNDIVRLRTTSNIIQFVNEDKNILIVNDMVYFPMNASDIGKKIHILIQEIVHEVMIVKKKESSDKIDFFPPNYKLLKDLFPKQTIQTPIQSDAGMVLTTDGFYIDGKLFNEDLSSKYVTFTKNVITSDAVAKYFSPLFKYVISEAKDRFIKTWMINIMIHMNVDPNNIIPTLEKYYPNFGRVQIN</sequence>
<feature type="chain" id="PRO_0000448132" description="Early transcription factor 82 kDa subunit">
    <location>
        <begin position="1"/>
        <end position="710"/>
    </location>
</feature>
<feature type="sequence variant" description="In strain: Garcia-1966.">
    <original>R</original>
    <variation>K</variation>
    <location>
        <position position="134"/>
    </location>
</feature>
<reference key="1">
    <citation type="journal article" date="1993" name="Nature">
        <title>Potential virulence determinants in terminal regions of variola smallpox virus genome.</title>
        <authorList>
            <person name="Massung R.F."/>
            <person name="Esposito J.J."/>
            <person name="Liu L.I."/>
            <person name="Qi J."/>
            <person name="Utterback T.R."/>
            <person name="Knight J.C."/>
            <person name="Aubin L."/>
            <person name="Yuran T.E."/>
            <person name="Parsons J.M."/>
            <person name="Loparev V.N."/>
            <person name="Selivanov N.A."/>
            <person name="Cavallaro K.F."/>
            <person name="Kerlavage A.R."/>
            <person name="Mahy B.W.J."/>
            <person name="Venter J.C."/>
        </authorList>
    </citation>
    <scope>NUCLEOTIDE SEQUENCE [GENOMIC DNA]</scope>
    <source>
        <strain>Bangladesh-1975</strain>
    </source>
</reference>
<reference key="2">
    <citation type="journal article" date="2000" name="Virology">
        <title>Alastrim smallpox variola minor virus genome DNA sequences.</title>
        <authorList>
            <person name="Shchelkunov S.N."/>
            <person name="Totmenin A.V."/>
            <person name="Loparev V.N."/>
            <person name="Safronov P.F."/>
            <person name="Gutorov V.V."/>
            <person name="Chizhikov V.E."/>
            <person name="Knight J.C."/>
            <person name="Parsons J.M."/>
            <person name="Massung R.F."/>
            <person name="Esposito J.J."/>
        </authorList>
    </citation>
    <scope>NUCLEOTIDE SEQUENCE [LARGE SCALE GENOMIC DNA]</scope>
    <source>
        <strain>Garcia-1966</strain>
    </source>
</reference>
<keyword id="KW-0010">Activator</keyword>
<keyword id="KW-0238">DNA-binding</keyword>
<keyword id="KW-0804">Transcription</keyword>
<keyword id="KW-0805">Transcription regulation</keyword>
<keyword id="KW-0946">Virion</keyword>
<evidence type="ECO:0000250" key="1"/>
<evidence type="ECO:0000250" key="2">
    <source>
        <dbReference type="UniProtKB" id="P20636"/>
    </source>
</evidence>
<evidence type="ECO:0000305" key="3"/>
<dbReference type="EMBL" id="L22579">
    <property type="protein sequence ID" value="AAA60859.1"/>
    <property type="molecule type" value="Genomic_DNA"/>
</dbReference>
<dbReference type="EMBL" id="X76265">
    <property type="protein sequence ID" value="CAA53849.1"/>
    <property type="molecule type" value="Genomic_DNA"/>
</dbReference>
<dbReference type="EMBL" id="Y16780">
    <property type="protein sequence ID" value="CAB54711.1"/>
    <property type="molecule type" value="Genomic_DNA"/>
</dbReference>
<dbReference type="PIR" id="E72164">
    <property type="entry name" value="E72164"/>
</dbReference>
<dbReference type="PIR" id="T28549">
    <property type="entry name" value="T28549"/>
</dbReference>
<dbReference type="RefSeq" id="NP_042155.1">
    <property type="nucleotide sequence ID" value="NC_001611.1"/>
</dbReference>
<dbReference type="SMR" id="P0DOU8"/>
<dbReference type="GeneID" id="1486537"/>
<dbReference type="KEGG" id="vg:1486537"/>
<dbReference type="Proteomes" id="UP000111493">
    <property type="component" value="Segment"/>
</dbReference>
<dbReference type="Proteomes" id="UP000119805">
    <property type="component" value="Segment"/>
</dbReference>
<dbReference type="GO" id="GO:0044423">
    <property type="term" value="C:virion component"/>
    <property type="evidence" value="ECO:0007669"/>
    <property type="project" value="UniProtKB-KW"/>
</dbReference>
<dbReference type="GO" id="GO:0003677">
    <property type="term" value="F:DNA binding"/>
    <property type="evidence" value="ECO:0007669"/>
    <property type="project" value="UniProtKB-KW"/>
</dbReference>
<dbReference type="GO" id="GO:0045893">
    <property type="term" value="P:positive regulation of DNA-templated transcription"/>
    <property type="evidence" value="ECO:0007669"/>
    <property type="project" value="InterPro"/>
</dbReference>
<dbReference type="InterPro" id="IPR007532">
    <property type="entry name" value="Poxvirus_early-TF_lsu"/>
</dbReference>
<dbReference type="Pfam" id="PF04441">
    <property type="entry name" value="Pox_VERT_large"/>
    <property type="match status" value="1"/>
</dbReference>
<organismHost>
    <name type="scientific">Homo sapiens</name>
    <name type="common">Human</name>
    <dbReference type="NCBI Taxonomy" id="9606"/>
</organismHost>
<name>ETF2_VARV</name>
<accession>P0DOU8</accession>
<accession>P33806</accession>
<accession>Q89178</accession>
<comment type="function">
    <text evidence="2">Acts with RNA polymerase to initiate transcription from early gene promoters. Is recruited by the RPO-associated protein of 94 kDa RAP94/OPG109 to form the early transcription complex, which also contains the core RNA polymerase. ETF heterodimer binds to early gene promoters.</text>
</comment>
<comment type="subunit">
    <text evidence="2">Heterodimer of a 70 kDa and a 82 kDa subunit. Part of the early transcription complex composed of ETF, RAP94/OPG109, and the DNA-directed RNA polymerase.</text>
</comment>
<comment type="subcellular location">
    <subcellularLocation>
        <location evidence="2">Virion</location>
    </subcellularLocation>
    <text evidence="1">All the enzymes and other proteins required to synthesize early mRNAs are packaged within the virion core along with the DNA genome. This is necessary because viral early mRNAs are synthesized within minutes after virus entry into the cell and are extruded through pores in the core particle (By similarity).</text>
</comment>
<comment type="similarity">
    <text evidence="3">Belongs to the poxviridae VETF large subunit family.</text>
</comment>
<proteinExistence type="inferred from homology"/>